<keyword id="KW-0175">Coiled coil</keyword>
<keyword id="KW-0200">Cytadherence</keyword>
<keyword id="KW-1185">Reference proteome</keyword>
<keyword id="KW-0843">Virulence</keyword>
<gene>
    <name type="primary">hmw2</name>
    <name type="ordered locus">MG218</name>
</gene>
<protein>
    <recommendedName>
        <fullName>Cytadherence high molecular weight protein 2</fullName>
    </recommendedName>
    <alternativeName>
        <fullName>Cytadherence accessory protein 2</fullName>
    </alternativeName>
</protein>
<feature type="chain" id="PRO_0000084013" description="Cytadherence high molecular weight protein 2">
    <location>
        <begin position="1"/>
        <end position="1805"/>
    </location>
</feature>
<feature type="coiled-coil region" evidence="2">
    <location>
        <begin position="28"/>
        <end position="838"/>
    </location>
</feature>
<feature type="coiled-coil region" evidence="2">
    <location>
        <begin position="914"/>
        <end position="1591"/>
    </location>
</feature>
<feature type="coiled-coil region" evidence="2">
    <location>
        <begin position="1632"/>
        <end position="1723"/>
    </location>
</feature>
<feature type="coiled-coil region" evidence="2">
    <location>
        <begin position="1777"/>
        <end position="1804"/>
    </location>
</feature>
<accession>P47460</accession>
<evidence type="ECO:0000250" key="1"/>
<evidence type="ECO:0000255" key="2"/>
<reference key="1">
    <citation type="journal article" date="1995" name="Science">
        <title>The minimal gene complement of Mycoplasma genitalium.</title>
        <authorList>
            <person name="Fraser C.M."/>
            <person name="Gocayne J.D."/>
            <person name="White O."/>
            <person name="Adams M.D."/>
            <person name="Clayton R.A."/>
            <person name="Fleischmann R.D."/>
            <person name="Bult C.J."/>
            <person name="Kerlavage A.R."/>
            <person name="Sutton G.G."/>
            <person name="Kelley J.M."/>
            <person name="Fritchman J.L."/>
            <person name="Weidman J.F."/>
            <person name="Small K.V."/>
            <person name="Sandusky M."/>
            <person name="Fuhrmann J.L."/>
            <person name="Nguyen D.T."/>
            <person name="Utterback T.R."/>
            <person name="Saudek D.M."/>
            <person name="Phillips C.A."/>
            <person name="Merrick J.M."/>
            <person name="Tomb J.-F."/>
            <person name="Dougherty B.A."/>
            <person name="Bott K.F."/>
            <person name="Hu P.-C."/>
            <person name="Lucier T.S."/>
            <person name="Peterson S.N."/>
            <person name="Smith H.O."/>
            <person name="Hutchison C.A. III"/>
            <person name="Venter J.C."/>
        </authorList>
    </citation>
    <scope>NUCLEOTIDE SEQUENCE [LARGE SCALE GENOMIC DNA]</scope>
    <source>
        <strain>ATCC 33530 / DSM 19775 / NCTC 10195 / G37</strain>
    </source>
</reference>
<reference key="2">
    <citation type="journal article" date="1993" name="J. Bacteriol.">
        <title>A survey of the Mycoplasma genitalium genome by using random sequencing.</title>
        <authorList>
            <person name="Peterson S.N."/>
            <person name="Hu P.-C."/>
            <person name="Bott K.F."/>
            <person name="Hutchison C.A. III"/>
        </authorList>
    </citation>
    <scope>NUCLEOTIDE SEQUENCE [GENOMIC DNA] OF 557-659</scope>
    <source>
        <strain>ATCC 33530 / DSM 19775 / NCTC 10195 / G37</strain>
    </source>
</reference>
<sequence length="1805" mass="216253">MKPFDKKPSLQPIYDIGFDDGYLQSEYEKNRSKTDVDKIENQLLKEIKSLEDELKNLKGLKNQAEDNPELDKKINHLEVDLNRLVNEYKNFQFQKNHMVDKVSELDNLTRFYKNELTRLQQENADFLNSKYANLANFQANYHNKLNDFHRLIENQNQTINRLNQKINGNQNLIDNNVALLQNPNITVEKKNYLLNVIDQLYNELDQLENQKRLLSIEYENTYRELVSADNELQNVYENIDQNQIQFKHQYQTYRDELSQLERKIQLTKQELVDKESALRVKIDDADFYINARLAELDDVAKQLSFQDGITKQNAQHVEDKLVALNKEKDRLNTQKEAFFNLRQSALIDINKLQQENELFAKHLEHQQNEFEQKQSDSLLKLETEYKALQHKINEFKNESATKSEELLNQERELFEKRREIDTLLTQASLEYEHQRESSQLLKDKQNEVKQHFQNLEYAKKELDKERNLLDQQKKVDSEAIFQLKEKVAQERKELEELYLVKKQKQDQKENELLFFEKQLKQHQADFENELEAKQQELFEAKHALERSFIKLEDKEKDLNTKAQQIANEFSQLKTDKSKSADFELMLQNEYENLQQEKQKLFQERTYFERNAAVLSNRLQQKREELLQQKETLDQLTKSFEQERLINQREHKELVASVEKQKEILGKKLQDFSQTSLNASKNLAEREMAIKFKEKEIEATEKQLLNDVNNAEVIQADLAQLNQSLNQERSELQNAKQRIADFHNDSLKKLNEYELSLQKRLQELQTLEANQKQHSYQNQAYFEGELDKLNREKQAFLNLRKKQTMEVDAIKQRLSDKHQALNMQQAELDRKTHELNNAFLNHDADQKSLQDQLATVKETQKLIDLERSALLEKQREFAENVAGFKRHWSNKTSQLQKIYELTKKQESEQTQKETELKIAFSDLQKDYQVFELQKDQEFRQIEAKQRELDKLAEKNNQVKLELDNRFQALQNQKQDTVQAQLELEREQHQLNLEQTAFNQANESLLKQREQLTKKIQAFHYELKKRNQFLALKGKRLFAKEQDQQRKDQEINWRFKQFEKEYTDFDEAKKRELEELEKIRRSLSQSNVELERKREKLATDFTNLNKVQHNTQINRDQLNSQIRQFLLERKNFQRFSNEANAKKAFLIKRLRSFASNLKLQKEALAIQKLEFDKRDEQQKKELQQATLQLEQFKFEKQNFDIEKQRQLVAIKTQCEKLSDEKKALNQKLVELKNLSQTYLANKNKAEYSQQQLQQKYTNLLDLKENLERTKDQLDKKHRSIFARLTKFANDLRFEKKQLLKAQRIVDDKNRLLKENERNLHFLSNETERKRAVLEDQISYFEKQRKQATDAILASHKEVKKKEGELQKLLVELETRKTKLNNDFAKFSRQREEFENQRLKLLELQKTLQTQTNSNNFKTKAIQEIENSYKRGMEELNFQKKEFDKNKSRLYEYFRKMRDEIERKESQVKLVLKETQRKANLLEAQANKLNIEKNTIDFKEKELKAFKDKVDQDIDSTNKQRKELNELLNENKLLQQSLIERERAINSKDSLLNKKIETIKRQLHDKEMRVLRLVDRMKLAEQKYQTEINRLRTQTFDSEKQDIKNFFPPLFKINGNDMAFPYLYPWLYPQQKQDDNTLQIRQLFEQQLQFMQQRYENELNELRRQRNLLEKKLDQIQLESQLNNKQSEFSKVESMMEKLLEKTESRLNDFDQKINYLTKKVNQHNTYQPSSYQPTPSYQDSDKQQLLFRIQELEKQNLFQQQFQPAPAVVQQPTSFAAPNITKQQQIAQLNAEINNIKRLIAQKAASK</sequence>
<organism>
    <name type="scientific">Mycoplasma genitalium (strain ATCC 33530 / DSM 19775 / NCTC 10195 / G37)</name>
    <name type="common">Mycoplasmoides genitalium</name>
    <dbReference type="NCBI Taxonomy" id="243273"/>
    <lineage>
        <taxon>Bacteria</taxon>
        <taxon>Bacillati</taxon>
        <taxon>Mycoplasmatota</taxon>
        <taxon>Mycoplasmoidales</taxon>
        <taxon>Mycoplasmoidaceae</taxon>
        <taxon>Mycoplasmoides</taxon>
    </lineage>
</organism>
<comment type="function">
    <text evidence="1">Component of the cytoskeleton-like structure which stabilizes the shape of the wall-less Mycoplasma. This cytoskeleton-like network of accessory proteins containing HMW proteins 1 to 5 allows the proper anchoring of cytadhesin proteins in the mycoplasmal membrane at the attachment organelle (By similarity).</text>
</comment>
<name>HMW2_MYCGE</name>
<dbReference type="EMBL" id="L43967">
    <property type="protein sequence ID" value="AAC71437.1"/>
    <property type="molecule type" value="Genomic_DNA"/>
</dbReference>
<dbReference type="EMBL" id="U02165">
    <property type="protein sequence ID" value="AAD12447.1"/>
    <property type="molecule type" value="Genomic_DNA"/>
</dbReference>
<dbReference type="PIR" id="A64224">
    <property type="entry name" value="A64224"/>
</dbReference>
<dbReference type="RefSeq" id="WP_010869377.1">
    <property type="nucleotide sequence ID" value="NC_000908.2"/>
</dbReference>
<dbReference type="SMR" id="P47460"/>
<dbReference type="STRING" id="243273.MG_218"/>
<dbReference type="GeneID" id="88282361"/>
<dbReference type="KEGG" id="mge:MG_218"/>
<dbReference type="eggNOG" id="COG0419">
    <property type="taxonomic scope" value="Bacteria"/>
</dbReference>
<dbReference type="eggNOG" id="COG1196">
    <property type="taxonomic scope" value="Bacteria"/>
</dbReference>
<dbReference type="HOGENOM" id="CLU_237675_0_0_14"/>
<dbReference type="InParanoid" id="P47460"/>
<dbReference type="OrthoDB" id="398247at2"/>
<dbReference type="BioCyc" id="MGEN243273:G1GJ2-262-MONOMER"/>
<dbReference type="Proteomes" id="UP000000807">
    <property type="component" value="Chromosome"/>
</dbReference>
<dbReference type="GO" id="GO:0020035">
    <property type="term" value="P:adhesion of symbiont to microvasculature"/>
    <property type="evidence" value="ECO:0007669"/>
    <property type="project" value="UniProtKB-KW"/>
</dbReference>
<dbReference type="InterPro" id="IPR016430">
    <property type="entry name" value="Cytadherence_Hmw2"/>
</dbReference>
<dbReference type="PIRSF" id="PIRSF004800">
    <property type="entry name" value="Hmw2"/>
    <property type="match status" value="1"/>
</dbReference>
<proteinExistence type="inferred from homology"/>